<keyword id="KW-0119">Carbohydrate metabolism</keyword>
<keyword id="KW-0903">Direct protein sequencing</keyword>
<keyword id="KW-1015">Disulfide bond</keyword>
<keyword id="KW-0313">Glucose metabolism</keyword>
<keyword id="KW-0372">Hormone</keyword>
<keyword id="KW-0964">Secreted</keyword>
<gene>
    <name type="primary">ins</name>
</gene>
<comment type="function">
    <text>Insulin decreases blood glucose concentration. It increases cell permeability to monosaccharides, amino acids and fatty acids. It accelerates glycolysis, the pentose phosphate cycle, and glycogen synthesis in liver.</text>
</comment>
<comment type="subunit">
    <text>Heterodimer of a B chain and an A chain linked by two disulfide bonds.</text>
</comment>
<comment type="subcellular location">
    <subcellularLocation>
        <location>Secreted</location>
    </subcellularLocation>
</comment>
<comment type="similarity">
    <text evidence="1">Belongs to the insulin family.</text>
</comment>
<reference key="1">
    <citation type="journal article" date="1998" name="Gen. Comp. Endocrinol.">
        <title>Purification and structural characterization of insulin and glucagon from the bichir Polypterus senegalis (Actinopterygii: Polypteriformes).</title>
        <authorList>
            <person name="Conlon J.M."/>
            <person name="Fan H.-Y."/>
            <person name="Fritzsch B."/>
        </authorList>
    </citation>
    <scope>PROTEIN SEQUENCE</scope>
    <source>
        <tissue>Pancreas</tissue>
    </source>
</reference>
<feature type="peptide" id="PRO_0000261314" description="Insulin B chain">
    <location>
        <begin position="1"/>
        <end position="31"/>
    </location>
</feature>
<feature type="peptide" id="PRO_0000261315" description="Insulin A chain">
    <location>
        <begin position="32"/>
        <end position="52"/>
    </location>
</feature>
<feature type="disulfide bond" description="Interchain (between B and A chains)">
    <location>
        <begin position="7"/>
        <end position="38"/>
    </location>
</feature>
<feature type="disulfide bond" description="Interchain (between B and A chains)">
    <location>
        <begin position="19"/>
        <end position="51"/>
    </location>
</feature>
<feature type="disulfide bond">
    <location>
        <begin position="37"/>
        <end position="42"/>
    </location>
</feature>
<feature type="non-consecutive residues" evidence="1">
    <location>
        <begin position="31"/>
        <end position="32"/>
    </location>
</feature>
<protein>
    <recommendedName>
        <fullName>Insulin</fullName>
    </recommendedName>
    <component>
        <recommendedName>
            <fullName>Insulin B chain</fullName>
        </recommendedName>
    </component>
    <component>
        <recommendedName>
            <fullName>Insulin A chain</fullName>
        </recommendedName>
    </component>
</protein>
<accession>P0C236</accession>
<proteinExistence type="evidence at protein level"/>
<name>INS_POLSE</name>
<organism>
    <name type="scientific">Polypterus senegalus</name>
    <name type="common">Senegal bichir</name>
    <dbReference type="NCBI Taxonomy" id="55291"/>
    <lineage>
        <taxon>Eukaryota</taxon>
        <taxon>Metazoa</taxon>
        <taxon>Chordata</taxon>
        <taxon>Craniata</taxon>
        <taxon>Vertebrata</taxon>
        <taxon>Euteleostomi</taxon>
        <taxon>Actinopterygii</taxon>
        <taxon>Polypteriformes</taxon>
        <taxon>Polypteridae</taxon>
        <taxon>Polypterus</taxon>
    </lineage>
</organism>
<sequence>AANRHLCGSHLVEALYLVCGNRGFFYIPSKMGIVEQCCDTPCSLYDPENYCN</sequence>
<evidence type="ECO:0000305" key="1"/>
<dbReference type="SMR" id="P0C236"/>
<dbReference type="GO" id="GO:0005615">
    <property type="term" value="C:extracellular space"/>
    <property type="evidence" value="ECO:0007669"/>
    <property type="project" value="TreeGrafter"/>
</dbReference>
<dbReference type="GO" id="GO:0005179">
    <property type="term" value="F:hormone activity"/>
    <property type="evidence" value="ECO:0007669"/>
    <property type="project" value="UniProtKB-KW"/>
</dbReference>
<dbReference type="GO" id="GO:0006006">
    <property type="term" value="P:glucose metabolic process"/>
    <property type="evidence" value="ECO:0007669"/>
    <property type="project" value="UniProtKB-KW"/>
</dbReference>
<dbReference type="CDD" id="cd04367">
    <property type="entry name" value="IlGF_insulin_like"/>
    <property type="match status" value="1"/>
</dbReference>
<dbReference type="Gene3D" id="1.10.100.10">
    <property type="entry name" value="Insulin-like"/>
    <property type="match status" value="2"/>
</dbReference>
<dbReference type="InterPro" id="IPR004825">
    <property type="entry name" value="Insulin"/>
</dbReference>
<dbReference type="InterPro" id="IPR016179">
    <property type="entry name" value="Insulin-like"/>
</dbReference>
<dbReference type="InterPro" id="IPR036438">
    <property type="entry name" value="Insulin-like_sf"/>
</dbReference>
<dbReference type="InterPro" id="IPR022352">
    <property type="entry name" value="Insulin_family"/>
</dbReference>
<dbReference type="PANTHER" id="PTHR11454:SF9">
    <property type="entry name" value="INSULIN"/>
    <property type="match status" value="1"/>
</dbReference>
<dbReference type="PANTHER" id="PTHR11454">
    <property type="entry name" value="INSULIN/INSULIN GROWTH FACTOR"/>
    <property type="match status" value="1"/>
</dbReference>
<dbReference type="Pfam" id="PF00049">
    <property type="entry name" value="Insulin"/>
    <property type="match status" value="1"/>
</dbReference>
<dbReference type="PRINTS" id="PR00277">
    <property type="entry name" value="INSULIN"/>
</dbReference>
<dbReference type="PRINTS" id="PR00276">
    <property type="entry name" value="INSULINFAMLY"/>
</dbReference>
<dbReference type="SMART" id="SM00078">
    <property type="entry name" value="IlGF"/>
    <property type="match status" value="1"/>
</dbReference>
<dbReference type="SUPFAM" id="SSF56994">
    <property type="entry name" value="Insulin-like"/>
    <property type="match status" value="1"/>
</dbReference>